<comment type="function">
    <text evidence="1">One of the primary rRNA binding proteins, it binds specifically to the 5'-end of 16S ribosomal RNA.</text>
</comment>
<comment type="subunit">
    <text evidence="1">Part of the 30S ribosomal subunit.</text>
</comment>
<comment type="similarity">
    <text evidence="1">Belongs to the universal ribosomal protein uS17 family.</text>
</comment>
<evidence type="ECO:0000255" key="1">
    <source>
        <dbReference type="HAMAP-Rule" id="MF_01345"/>
    </source>
</evidence>
<evidence type="ECO:0000305" key="2"/>
<reference key="1">
    <citation type="journal article" date="2004" name="Science">
        <title>Illuminating the evolutionary history of chlamydiae.</title>
        <authorList>
            <person name="Horn M."/>
            <person name="Collingro A."/>
            <person name="Schmitz-Esser S."/>
            <person name="Beier C.L."/>
            <person name="Purkhold U."/>
            <person name="Fartmann B."/>
            <person name="Brandt P."/>
            <person name="Nyakatura G.J."/>
            <person name="Droege M."/>
            <person name="Frishman D."/>
            <person name="Rattei T."/>
            <person name="Mewes H.-W."/>
            <person name="Wagner M."/>
        </authorList>
    </citation>
    <scope>NUCLEOTIDE SEQUENCE [LARGE SCALE GENOMIC DNA]</scope>
    <source>
        <strain>UWE25</strain>
    </source>
</reference>
<feature type="chain" id="PRO_0000233527" description="Small ribosomal subunit protein uS17">
    <location>
        <begin position="1"/>
        <end position="81"/>
    </location>
</feature>
<proteinExistence type="inferred from homology"/>
<protein>
    <recommendedName>
        <fullName evidence="1">Small ribosomal subunit protein uS17</fullName>
    </recommendedName>
    <alternativeName>
        <fullName evidence="2">30S ribosomal protein S17</fullName>
    </alternativeName>
</protein>
<dbReference type="EMBL" id="BX908798">
    <property type="protein sequence ID" value="CAF23145.1"/>
    <property type="molecule type" value="Genomic_DNA"/>
</dbReference>
<dbReference type="RefSeq" id="WP_011174971.1">
    <property type="nucleotide sequence ID" value="NC_005861.2"/>
</dbReference>
<dbReference type="SMR" id="Q6ME54"/>
<dbReference type="STRING" id="264201.pc0421"/>
<dbReference type="KEGG" id="pcu:PC_RS02055"/>
<dbReference type="eggNOG" id="COG0186">
    <property type="taxonomic scope" value="Bacteria"/>
</dbReference>
<dbReference type="HOGENOM" id="CLU_073626_1_0_0"/>
<dbReference type="OrthoDB" id="9811714at2"/>
<dbReference type="Proteomes" id="UP000000529">
    <property type="component" value="Chromosome"/>
</dbReference>
<dbReference type="GO" id="GO:0022627">
    <property type="term" value="C:cytosolic small ribosomal subunit"/>
    <property type="evidence" value="ECO:0007669"/>
    <property type="project" value="TreeGrafter"/>
</dbReference>
<dbReference type="GO" id="GO:0019843">
    <property type="term" value="F:rRNA binding"/>
    <property type="evidence" value="ECO:0007669"/>
    <property type="project" value="UniProtKB-UniRule"/>
</dbReference>
<dbReference type="GO" id="GO:0003735">
    <property type="term" value="F:structural constituent of ribosome"/>
    <property type="evidence" value="ECO:0007669"/>
    <property type="project" value="InterPro"/>
</dbReference>
<dbReference type="GO" id="GO:0006412">
    <property type="term" value="P:translation"/>
    <property type="evidence" value="ECO:0007669"/>
    <property type="project" value="UniProtKB-UniRule"/>
</dbReference>
<dbReference type="CDD" id="cd00364">
    <property type="entry name" value="Ribosomal_uS17"/>
    <property type="match status" value="1"/>
</dbReference>
<dbReference type="Gene3D" id="2.40.50.140">
    <property type="entry name" value="Nucleic acid-binding proteins"/>
    <property type="match status" value="1"/>
</dbReference>
<dbReference type="HAMAP" id="MF_01345_B">
    <property type="entry name" value="Ribosomal_uS17_B"/>
    <property type="match status" value="1"/>
</dbReference>
<dbReference type="InterPro" id="IPR012340">
    <property type="entry name" value="NA-bd_OB-fold"/>
</dbReference>
<dbReference type="InterPro" id="IPR000266">
    <property type="entry name" value="Ribosomal_uS17"/>
</dbReference>
<dbReference type="InterPro" id="IPR019984">
    <property type="entry name" value="Ribosomal_uS17_bact/chlr"/>
</dbReference>
<dbReference type="InterPro" id="IPR019979">
    <property type="entry name" value="Ribosomal_uS17_CS"/>
</dbReference>
<dbReference type="NCBIfam" id="NF004123">
    <property type="entry name" value="PRK05610.1"/>
    <property type="match status" value="1"/>
</dbReference>
<dbReference type="NCBIfam" id="TIGR03635">
    <property type="entry name" value="uS17_bact"/>
    <property type="match status" value="1"/>
</dbReference>
<dbReference type="PANTHER" id="PTHR10744">
    <property type="entry name" value="40S RIBOSOMAL PROTEIN S11 FAMILY MEMBER"/>
    <property type="match status" value="1"/>
</dbReference>
<dbReference type="PANTHER" id="PTHR10744:SF1">
    <property type="entry name" value="SMALL RIBOSOMAL SUBUNIT PROTEIN US17M"/>
    <property type="match status" value="1"/>
</dbReference>
<dbReference type="Pfam" id="PF00366">
    <property type="entry name" value="Ribosomal_S17"/>
    <property type="match status" value="1"/>
</dbReference>
<dbReference type="PRINTS" id="PR00973">
    <property type="entry name" value="RIBOSOMALS17"/>
</dbReference>
<dbReference type="SUPFAM" id="SSF50249">
    <property type="entry name" value="Nucleic acid-binding proteins"/>
    <property type="match status" value="1"/>
</dbReference>
<dbReference type="PROSITE" id="PS00056">
    <property type="entry name" value="RIBOSOMAL_S17"/>
    <property type="match status" value="1"/>
</dbReference>
<name>RS17_PARUW</name>
<accession>Q6ME54</accession>
<keyword id="KW-1185">Reference proteome</keyword>
<keyword id="KW-0687">Ribonucleoprotein</keyword>
<keyword id="KW-0689">Ribosomal protein</keyword>
<keyword id="KW-0694">RNA-binding</keyword>
<keyword id="KW-0699">rRNA-binding</keyword>
<sequence length="81" mass="9399">MQQEERGSRKVKKGIVVSNKMQKTVVVKVERTFAHPQYGKIVTRGKKYYAHNESGDLQIGDEVKIMETRPLSKLKRWRVVA</sequence>
<gene>
    <name evidence="1" type="primary">rpsQ</name>
    <name type="ordered locus">pc0421</name>
</gene>
<organism>
    <name type="scientific">Protochlamydia amoebophila (strain UWE25)</name>
    <dbReference type="NCBI Taxonomy" id="264201"/>
    <lineage>
        <taxon>Bacteria</taxon>
        <taxon>Pseudomonadati</taxon>
        <taxon>Chlamydiota</taxon>
        <taxon>Chlamydiia</taxon>
        <taxon>Parachlamydiales</taxon>
        <taxon>Parachlamydiaceae</taxon>
        <taxon>Candidatus Protochlamydia</taxon>
    </lineage>
</organism>